<comment type="function">
    <text evidence="1">Participates actively in the response to hyperosmotic and heat shock by preventing the aggregation of stress-denatured proteins, in association with DnaK and GrpE. It is the nucleotide exchange factor for DnaK and may function as a thermosensor. Unfolded proteins bind initially to DnaJ; upon interaction with the DnaJ-bound protein, DnaK hydrolyzes its bound ATP, resulting in the formation of a stable complex. GrpE releases ADP from DnaK; ATP binding to DnaK triggers the release of the substrate protein, thus completing the reaction cycle. Several rounds of ATP-dependent interactions between DnaJ, DnaK and GrpE are required for fully efficient folding.</text>
</comment>
<comment type="subunit">
    <text evidence="1">Homodimer.</text>
</comment>
<comment type="subcellular location">
    <subcellularLocation>
        <location evidence="1">Cytoplasm</location>
    </subcellularLocation>
</comment>
<comment type="similarity">
    <text evidence="1">Belongs to the GrpE family.</text>
</comment>
<gene>
    <name evidence="1" type="primary">grpE</name>
    <name type="ordered locus">SAK_0146</name>
</gene>
<dbReference type="EMBL" id="CP000114">
    <property type="protein sequence ID" value="ABA46015.1"/>
    <property type="molecule type" value="Genomic_DNA"/>
</dbReference>
<dbReference type="SMR" id="Q3K3T3"/>
<dbReference type="KEGG" id="sak:SAK_0146"/>
<dbReference type="HOGENOM" id="CLU_057217_6_3_9"/>
<dbReference type="GO" id="GO:0005737">
    <property type="term" value="C:cytoplasm"/>
    <property type="evidence" value="ECO:0007669"/>
    <property type="project" value="UniProtKB-SubCell"/>
</dbReference>
<dbReference type="GO" id="GO:0000774">
    <property type="term" value="F:adenyl-nucleotide exchange factor activity"/>
    <property type="evidence" value="ECO:0007669"/>
    <property type="project" value="InterPro"/>
</dbReference>
<dbReference type="GO" id="GO:0042803">
    <property type="term" value="F:protein homodimerization activity"/>
    <property type="evidence" value="ECO:0007669"/>
    <property type="project" value="InterPro"/>
</dbReference>
<dbReference type="GO" id="GO:0051087">
    <property type="term" value="F:protein-folding chaperone binding"/>
    <property type="evidence" value="ECO:0007669"/>
    <property type="project" value="InterPro"/>
</dbReference>
<dbReference type="GO" id="GO:0051082">
    <property type="term" value="F:unfolded protein binding"/>
    <property type="evidence" value="ECO:0007669"/>
    <property type="project" value="TreeGrafter"/>
</dbReference>
<dbReference type="GO" id="GO:0006457">
    <property type="term" value="P:protein folding"/>
    <property type="evidence" value="ECO:0007669"/>
    <property type="project" value="InterPro"/>
</dbReference>
<dbReference type="CDD" id="cd00446">
    <property type="entry name" value="GrpE"/>
    <property type="match status" value="1"/>
</dbReference>
<dbReference type="Gene3D" id="3.90.20.20">
    <property type="match status" value="1"/>
</dbReference>
<dbReference type="Gene3D" id="2.30.22.10">
    <property type="entry name" value="Head domain of nucleotide exchange factor GrpE"/>
    <property type="match status" value="1"/>
</dbReference>
<dbReference type="HAMAP" id="MF_01151">
    <property type="entry name" value="GrpE"/>
    <property type="match status" value="1"/>
</dbReference>
<dbReference type="InterPro" id="IPR000740">
    <property type="entry name" value="GrpE"/>
</dbReference>
<dbReference type="InterPro" id="IPR013805">
    <property type="entry name" value="GrpE_coiled_coil"/>
</dbReference>
<dbReference type="InterPro" id="IPR009012">
    <property type="entry name" value="GrpE_head"/>
</dbReference>
<dbReference type="NCBIfam" id="NF010738">
    <property type="entry name" value="PRK14140.1"/>
    <property type="match status" value="1"/>
</dbReference>
<dbReference type="NCBIfam" id="NF010753">
    <property type="entry name" value="PRK14156.1"/>
    <property type="match status" value="1"/>
</dbReference>
<dbReference type="PANTHER" id="PTHR21237">
    <property type="entry name" value="GRPE PROTEIN"/>
    <property type="match status" value="1"/>
</dbReference>
<dbReference type="PANTHER" id="PTHR21237:SF23">
    <property type="entry name" value="GRPE PROTEIN HOMOLOG, MITOCHONDRIAL"/>
    <property type="match status" value="1"/>
</dbReference>
<dbReference type="Pfam" id="PF01025">
    <property type="entry name" value="GrpE"/>
    <property type="match status" value="1"/>
</dbReference>
<dbReference type="PRINTS" id="PR00773">
    <property type="entry name" value="GRPEPROTEIN"/>
</dbReference>
<dbReference type="SUPFAM" id="SSF58014">
    <property type="entry name" value="Coiled-coil domain of nucleotide exchange factor GrpE"/>
    <property type="match status" value="1"/>
</dbReference>
<dbReference type="SUPFAM" id="SSF51064">
    <property type="entry name" value="Head domain of nucleotide exchange factor GrpE"/>
    <property type="match status" value="1"/>
</dbReference>
<dbReference type="PROSITE" id="PS01071">
    <property type="entry name" value="GRPE"/>
    <property type="match status" value="1"/>
</dbReference>
<sequence length="177" mass="20483">MSEEIKKDDLQEEVEATETEETVEEVIEEIPEKSELELANERADEFENKYLRAHAEMQNIQRRSSEERQQLQRYRSQDLAKAILPSLDNLERALAVEGLTDDVKKGLEMTRDSLIQALKEEGVEEVEVDSFDHNFHMAVQTLPADDEHPADSIAEVFQKGYKLHERLLRPAMVVVYN</sequence>
<proteinExistence type="inferred from homology"/>
<organism>
    <name type="scientific">Streptococcus agalactiae serotype Ia (strain ATCC 27591 / A909 / CDC SS700)</name>
    <dbReference type="NCBI Taxonomy" id="205921"/>
    <lineage>
        <taxon>Bacteria</taxon>
        <taxon>Bacillati</taxon>
        <taxon>Bacillota</taxon>
        <taxon>Bacilli</taxon>
        <taxon>Lactobacillales</taxon>
        <taxon>Streptococcaceae</taxon>
        <taxon>Streptococcus</taxon>
    </lineage>
</organism>
<evidence type="ECO:0000255" key="1">
    <source>
        <dbReference type="HAMAP-Rule" id="MF_01151"/>
    </source>
</evidence>
<evidence type="ECO:0000256" key="2">
    <source>
        <dbReference type="SAM" id="MobiDB-lite"/>
    </source>
</evidence>
<name>GRPE_STRA1</name>
<accession>Q3K3T3</accession>
<keyword id="KW-0143">Chaperone</keyword>
<keyword id="KW-0963">Cytoplasm</keyword>
<keyword id="KW-0346">Stress response</keyword>
<protein>
    <recommendedName>
        <fullName evidence="1">Protein GrpE</fullName>
    </recommendedName>
    <alternativeName>
        <fullName evidence="1">HSP-70 cofactor</fullName>
    </alternativeName>
</protein>
<feature type="chain" id="PRO_1000053649" description="Protein GrpE">
    <location>
        <begin position="1"/>
        <end position="177"/>
    </location>
</feature>
<feature type="region of interest" description="Disordered" evidence="2">
    <location>
        <begin position="1"/>
        <end position="26"/>
    </location>
</feature>
<feature type="compositionally biased region" description="Acidic residues" evidence="2">
    <location>
        <begin position="10"/>
        <end position="26"/>
    </location>
</feature>
<reference key="1">
    <citation type="journal article" date="2005" name="Proc. Natl. Acad. Sci. U.S.A.">
        <title>Genome analysis of multiple pathogenic isolates of Streptococcus agalactiae: implications for the microbial 'pan-genome'.</title>
        <authorList>
            <person name="Tettelin H."/>
            <person name="Masignani V."/>
            <person name="Cieslewicz M.J."/>
            <person name="Donati C."/>
            <person name="Medini D."/>
            <person name="Ward N.L."/>
            <person name="Angiuoli S.V."/>
            <person name="Crabtree J."/>
            <person name="Jones A.L."/>
            <person name="Durkin A.S."/>
            <person name="DeBoy R.T."/>
            <person name="Davidsen T.M."/>
            <person name="Mora M."/>
            <person name="Scarselli M."/>
            <person name="Margarit y Ros I."/>
            <person name="Peterson J.D."/>
            <person name="Hauser C.R."/>
            <person name="Sundaram J.P."/>
            <person name="Nelson W.C."/>
            <person name="Madupu R."/>
            <person name="Brinkac L.M."/>
            <person name="Dodson R.J."/>
            <person name="Rosovitz M.J."/>
            <person name="Sullivan S.A."/>
            <person name="Daugherty S.C."/>
            <person name="Haft D.H."/>
            <person name="Selengut J."/>
            <person name="Gwinn M.L."/>
            <person name="Zhou L."/>
            <person name="Zafar N."/>
            <person name="Khouri H."/>
            <person name="Radune D."/>
            <person name="Dimitrov G."/>
            <person name="Watkins K."/>
            <person name="O'Connor K.J."/>
            <person name="Smith S."/>
            <person name="Utterback T.R."/>
            <person name="White O."/>
            <person name="Rubens C.E."/>
            <person name="Grandi G."/>
            <person name="Madoff L.C."/>
            <person name="Kasper D.L."/>
            <person name="Telford J.L."/>
            <person name="Wessels M.R."/>
            <person name="Rappuoli R."/>
            <person name="Fraser C.M."/>
        </authorList>
    </citation>
    <scope>NUCLEOTIDE SEQUENCE [LARGE SCALE GENOMIC DNA]</scope>
    <source>
        <strain>ATCC 27591 / A909 / CDC SS700</strain>
    </source>
</reference>